<comment type="function">
    <text evidence="1">Ubiquitin-like modifier involved in autophagosomes formation. May mediate the delivery of the autophagosomes to the vacuole via the microtubule cytoskeleton.</text>
</comment>
<comment type="subunit">
    <text evidence="2">Interacts with ATG4.</text>
</comment>
<comment type="subcellular location">
    <subcellularLocation>
        <location evidence="1">Cytoplasmic vesicle</location>
        <location evidence="1">Autophagosome membrane</location>
        <topology evidence="1">Lipid-anchor</topology>
    </subcellularLocation>
    <subcellularLocation>
        <location evidence="1">Vacuole membrane</location>
        <topology evidence="1">Lipid-anchor</topology>
    </subcellularLocation>
    <subcellularLocation>
        <location evidence="3">Cytoplasm</location>
        <location evidence="3">Cytoskeleton</location>
    </subcellularLocation>
</comment>
<comment type="PTM">
    <text evidence="1">The C-terminal 3 residues are removed by ATG4 to expose Gly-117 at the C-terminus. The C-terminal Gly is then amidated with phosphatidylethanolamine by an activating system similar to that for ubiquitin.</text>
</comment>
<comment type="similarity">
    <text evidence="5">Belongs to the ATG8 family.</text>
</comment>
<evidence type="ECO:0000250" key="1">
    <source>
        <dbReference type="UniProtKB" id="P38182"/>
    </source>
</evidence>
<evidence type="ECO:0000250" key="2">
    <source>
        <dbReference type="UniProtKB" id="Q2XPP5"/>
    </source>
</evidence>
<evidence type="ECO:0000250" key="3">
    <source>
        <dbReference type="UniProtKB" id="Q8LEM4"/>
    </source>
</evidence>
<evidence type="ECO:0000256" key="4">
    <source>
        <dbReference type="SAM" id="MobiDB-lite"/>
    </source>
</evidence>
<evidence type="ECO:0000305" key="5"/>
<feature type="chain" id="PRO_0000286929" description="Autophagy-related protein 8C">
    <location>
        <begin position="1"/>
        <end position="117"/>
    </location>
</feature>
<feature type="propeptide" id="PRO_0000286930" description="Removed in mature form" evidence="2">
    <location>
        <begin position="118"/>
        <end position="120"/>
    </location>
</feature>
<feature type="region of interest" description="Disordered" evidence="4">
    <location>
        <begin position="1"/>
        <end position="20"/>
    </location>
</feature>
<feature type="site" description="Cleavage; by ATG4" evidence="2">
    <location>
        <begin position="117"/>
        <end position="118"/>
    </location>
</feature>
<feature type="lipid moiety-binding region" description="Phosphatidylethanolamine amidated glycine" evidence="1">
    <location>
        <position position="117"/>
    </location>
</feature>
<accession>A2YS06</accession>
<accession>B8BBF8</accession>
<dbReference type="EMBL" id="CM000133">
    <property type="protein sequence ID" value="EEC83026.1"/>
    <property type="molecule type" value="Genomic_DNA"/>
</dbReference>
<dbReference type="SMR" id="A2YS06"/>
<dbReference type="STRING" id="39946.A2YS06"/>
<dbReference type="EnsemblPlants" id="BGIOSGA028123-TA">
    <property type="protein sequence ID" value="BGIOSGA028123-PA"/>
    <property type="gene ID" value="BGIOSGA028123"/>
</dbReference>
<dbReference type="EnsemblPlants" id="OsIR64_08g0005600.01">
    <property type="protein sequence ID" value="OsIR64_08g0005600.01"/>
    <property type="gene ID" value="OsIR64_08g0005600"/>
</dbReference>
<dbReference type="EnsemblPlants" id="OsKYG_08g0005730.01">
    <property type="protein sequence ID" value="OsKYG_08g0005730.01"/>
    <property type="gene ID" value="OsKYG_08g0005730"/>
</dbReference>
<dbReference type="EnsemblPlants" id="OsLaMu_08g0005700.01">
    <property type="protein sequence ID" value="OsLaMu_08g0005700.01"/>
    <property type="gene ID" value="OsLaMu_08g0005700"/>
</dbReference>
<dbReference type="EnsemblPlants" id="OsLima_08g0005660.01">
    <property type="protein sequence ID" value="OsLima_08g0005660.01"/>
    <property type="gene ID" value="OsLima_08g0005660"/>
</dbReference>
<dbReference type="EnsemblPlants" id="OsMH63_08G005800_01">
    <property type="protein sequence ID" value="OsMH63_08G005800_01"/>
    <property type="gene ID" value="OsMH63_08G005800"/>
</dbReference>
<dbReference type="EnsemblPlants" id="OsMH63_08G005800_02">
    <property type="protein sequence ID" value="OsMH63_08G005800_02"/>
    <property type="gene ID" value="OsMH63_08G005800"/>
</dbReference>
<dbReference type="Gramene" id="BGIOSGA028123-TA">
    <property type="protein sequence ID" value="BGIOSGA028123-PA"/>
    <property type="gene ID" value="BGIOSGA028123"/>
</dbReference>
<dbReference type="Gramene" id="OsIR64_08g0005600.01">
    <property type="protein sequence ID" value="OsIR64_08g0005600.01"/>
    <property type="gene ID" value="OsIR64_08g0005600"/>
</dbReference>
<dbReference type="Gramene" id="OsKYG_08g0005730.01">
    <property type="protein sequence ID" value="OsKYG_08g0005730.01"/>
    <property type="gene ID" value="OsKYG_08g0005730"/>
</dbReference>
<dbReference type="Gramene" id="OsLaMu_08g0005700.01">
    <property type="protein sequence ID" value="OsLaMu_08g0005700.01"/>
    <property type="gene ID" value="OsLaMu_08g0005700"/>
</dbReference>
<dbReference type="Gramene" id="OsLima_08g0005660.01">
    <property type="protein sequence ID" value="OsLima_08g0005660.01"/>
    <property type="gene ID" value="OsLima_08g0005660"/>
</dbReference>
<dbReference type="Gramene" id="OsMH63_08G005800_01">
    <property type="protein sequence ID" value="OsMH63_08G005800_01"/>
    <property type="gene ID" value="OsMH63_08G005800"/>
</dbReference>
<dbReference type="Gramene" id="OsMH63_08G005800_02">
    <property type="protein sequence ID" value="OsMH63_08G005800_02"/>
    <property type="gene ID" value="OsMH63_08G005800"/>
</dbReference>
<dbReference type="HOGENOM" id="CLU_119276_0_1_1"/>
<dbReference type="OMA" id="AKMKWMF"/>
<dbReference type="Proteomes" id="UP000007015">
    <property type="component" value="Chromosome 8"/>
</dbReference>
<dbReference type="GO" id="GO:0000421">
    <property type="term" value="C:autophagosome membrane"/>
    <property type="evidence" value="ECO:0007669"/>
    <property type="project" value="UniProtKB-SubCell"/>
</dbReference>
<dbReference type="GO" id="GO:0031410">
    <property type="term" value="C:cytoplasmic vesicle"/>
    <property type="evidence" value="ECO:0007669"/>
    <property type="project" value="UniProtKB-KW"/>
</dbReference>
<dbReference type="GO" id="GO:0005874">
    <property type="term" value="C:microtubule"/>
    <property type="evidence" value="ECO:0007669"/>
    <property type="project" value="UniProtKB-KW"/>
</dbReference>
<dbReference type="GO" id="GO:0006914">
    <property type="term" value="P:autophagy"/>
    <property type="evidence" value="ECO:0007669"/>
    <property type="project" value="UniProtKB-KW"/>
</dbReference>
<dbReference type="GO" id="GO:0015031">
    <property type="term" value="P:protein transport"/>
    <property type="evidence" value="ECO:0007669"/>
    <property type="project" value="UniProtKB-KW"/>
</dbReference>
<dbReference type="CDD" id="cd16128">
    <property type="entry name" value="Ubl_ATG8"/>
    <property type="match status" value="1"/>
</dbReference>
<dbReference type="FunFam" id="3.10.20.90:FF:000010">
    <property type="entry name" value="Autophagy-related protein"/>
    <property type="match status" value="1"/>
</dbReference>
<dbReference type="Gene3D" id="3.10.20.90">
    <property type="entry name" value="Phosphatidylinositol 3-kinase Catalytic Subunit, Chain A, domain 1"/>
    <property type="match status" value="1"/>
</dbReference>
<dbReference type="InterPro" id="IPR004241">
    <property type="entry name" value="Atg8-like"/>
</dbReference>
<dbReference type="InterPro" id="IPR029071">
    <property type="entry name" value="Ubiquitin-like_domsf"/>
</dbReference>
<dbReference type="PANTHER" id="PTHR10969">
    <property type="entry name" value="MICROTUBULE-ASSOCIATED PROTEINS 1A/1B LIGHT CHAIN 3-RELATED"/>
    <property type="match status" value="1"/>
</dbReference>
<dbReference type="Pfam" id="PF02991">
    <property type="entry name" value="ATG8"/>
    <property type="match status" value="1"/>
</dbReference>
<dbReference type="SUPFAM" id="SSF54236">
    <property type="entry name" value="Ubiquitin-like"/>
    <property type="match status" value="1"/>
</dbReference>
<name>ATG8C_ORYSI</name>
<proteinExistence type="inferred from homology"/>
<organism>
    <name type="scientific">Oryza sativa subsp. indica</name>
    <name type="common">Rice</name>
    <dbReference type="NCBI Taxonomy" id="39946"/>
    <lineage>
        <taxon>Eukaryota</taxon>
        <taxon>Viridiplantae</taxon>
        <taxon>Streptophyta</taxon>
        <taxon>Embryophyta</taxon>
        <taxon>Tracheophyta</taxon>
        <taxon>Spermatophyta</taxon>
        <taxon>Magnoliopsida</taxon>
        <taxon>Liliopsida</taxon>
        <taxon>Poales</taxon>
        <taxon>Poaceae</taxon>
        <taxon>BOP clade</taxon>
        <taxon>Oryzoideae</taxon>
        <taxon>Oryzeae</taxon>
        <taxon>Oryzinae</taxon>
        <taxon>Oryza</taxon>
        <taxon>Oryza sativa</taxon>
    </lineage>
</organism>
<reference key="1">
    <citation type="journal article" date="2005" name="PLoS Biol.">
        <title>The genomes of Oryza sativa: a history of duplications.</title>
        <authorList>
            <person name="Yu J."/>
            <person name="Wang J."/>
            <person name="Lin W."/>
            <person name="Li S."/>
            <person name="Li H."/>
            <person name="Zhou J."/>
            <person name="Ni P."/>
            <person name="Dong W."/>
            <person name="Hu S."/>
            <person name="Zeng C."/>
            <person name="Zhang J."/>
            <person name="Zhang Y."/>
            <person name="Li R."/>
            <person name="Xu Z."/>
            <person name="Li S."/>
            <person name="Li X."/>
            <person name="Zheng H."/>
            <person name="Cong L."/>
            <person name="Lin L."/>
            <person name="Yin J."/>
            <person name="Geng J."/>
            <person name="Li G."/>
            <person name="Shi J."/>
            <person name="Liu J."/>
            <person name="Lv H."/>
            <person name="Li J."/>
            <person name="Wang J."/>
            <person name="Deng Y."/>
            <person name="Ran L."/>
            <person name="Shi X."/>
            <person name="Wang X."/>
            <person name="Wu Q."/>
            <person name="Li C."/>
            <person name="Ren X."/>
            <person name="Wang J."/>
            <person name="Wang X."/>
            <person name="Li D."/>
            <person name="Liu D."/>
            <person name="Zhang X."/>
            <person name="Ji Z."/>
            <person name="Zhao W."/>
            <person name="Sun Y."/>
            <person name="Zhang Z."/>
            <person name="Bao J."/>
            <person name="Han Y."/>
            <person name="Dong L."/>
            <person name="Ji J."/>
            <person name="Chen P."/>
            <person name="Wu S."/>
            <person name="Liu J."/>
            <person name="Xiao Y."/>
            <person name="Bu D."/>
            <person name="Tan J."/>
            <person name="Yang L."/>
            <person name="Ye C."/>
            <person name="Zhang J."/>
            <person name="Xu J."/>
            <person name="Zhou Y."/>
            <person name="Yu Y."/>
            <person name="Zhang B."/>
            <person name="Zhuang S."/>
            <person name="Wei H."/>
            <person name="Liu B."/>
            <person name="Lei M."/>
            <person name="Yu H."/>
            <person name="Li Y."/>
            <person name="Xu H."/>
            <person name="Wei S."/>
            <person name="He X."/>
            <person name="Fang L."/>
            <person name="Zhang Z."/>
            <person name="Zhang Y."/>
            <person name="Huang X."/>
            <person name="Su Z."/>
            <person name="Tong W."/>
            <person name="Li J."/>
            <person name="Tong Z."/>
            <person name="Li S."/>
            <person name="Ye J."/>
            <person name="Wang L."/>
            <person name="Fang L."/>
            <person name="Lei T."/>
            <person name="Chen C.-S."/>
            <person name="Chen H.-C."/>
            <person name="Xu Z."/>
            <person name="Li H."/>
            <person name="Huang H."/>
            <person name="Zhang F."/>
            <person name="Xu H."/>
            <person name="Li N."/>
            <person name="Zhao C."/>
            <person name="Li S."/>
            <person name="Dong L."/>
            <person name="Huang Y."/>
            <person name="Li L."/>
            <person name="Xi Y."/>
            <person name="Qi Q."/>
            <person name="Li W."/>
            <person name="Zhang B."/>
            <person name="Hu W."/>
            <person name="Zhang Y."/>
            <person name="Tian X."/>
            <person name="Jiao Y."/>
            <person name="Liang X."/>
            <person name="Jin J."/>
            <person name="Gao L."/>
            <person name="Zheng W."/>
            <person name="Hao B."/>
            <person name="Liu S.-M."/>
            <person name="Wang W."/>
            <person name="Yuan L."/>
            <person name="Cao M."/>
            <person name="McDermott J."/>
            <person name="Samudrala R."/>
            <person name="Wang J."/>
            <person name="Wong G.K.-S."/>
            <person name="Yang H."/>
        </authorList>
    </citation>
    <scope>NUCLEOTIDE SEQUENCE [LARGE SCALE GENOMIC DNA]</scope>
    <source>
        <strain>cv. 93-11</strain>
    </source>
</reference>
<protein>
    <recommendedName>
        <fullName>Autophagy-related protein 8C</fullName>
    </recommendedName>
    <alternativeName>
        <fullName>Autophagy-related ubiquitin-like modifier ATG8C</fullName>
    </alternativeName>
</protein>
<sequence length="120" mass="13888">MARSSFKLEHPLERRQAEANRIREKYPDRIPVIVEKAERSDIPDIDKKKYLVPADLTVGQFVYVVRKRIKLSAEKAIFIFVKNTLPPTAALMSAIYEENKDEDGFLYMTYSGENTFGLFV</sequence>
<keyword id="KW-0072">Autophagy</keyword>
<keyword id="KW-0963">Cytoplasm</keyword>
<keyword id="KW-0968">Cytoplasmic vesicle</keyword>
<keyword id="KW-0206">Cytoskeleton</keyword>
<keyword id="KW-0449">Lipoprotein</keyword>
<keyword id="KW-0472">Membrane</keyword>
<keyword id="KW-0493">Microtubule</keyword>
<keyword id="KW-0653">Protein transport</keyword>
<keyword id="KW-1185">Reference proteome</keyword>
<keyword id="KW-0813">Transport</keyword>
<keyword id="KW-0833">Ubl conjugation pathway</keyword>
<keyword id="KW-0926">Vacuole</keyword>
<gene>
    <name type="primary">ATG8C</name>
    <name type="synonym">APG8C</name>
    <name type="ORF">OsI_28104</name>
</gene>